<comment type="function">
    <text evidence="1">NDH shuttles electrons from NAD(P)H:plastoquinone, via FMN and iron-sulfur (Fe-S) centers, to quinones in the photosynthetic chain and possibly in a chloroplast respiratory chain. The immediate electron acceptor for the enzyme in this species is believed to be plastoquinone. Couples the redox reaction to proton translocation, and thus conserves the redox energy in a proton gradient.</text>
</comment>
<comment type="catalytic activity">
    <reaction evidence="1">
        <text>a plastoquinone + NADH + (n+1) H(+)(in) = a plastoquinol + NAD(+) + n H(+)(out)</text>
        <dbReference type="Rhea" id="RHEA:42608"/>
        <dbReference type="Rhea" id="RHEA-COMP:9561"/>
        <dbReference type="Rhea" id="RHEA-COMP:9562"/>
        <dbReference type="ChEBI" id="CHEBI:15378"/>
        <dbReference type="ChEBI" id="CHEBI:17757"/>
        <dbReference type="ChEBI" id="CHEBI:57540"/>
        <dbReference type="ChEBI" id="CHEBI:57945"/>
        <dbReference type="ChEBI" id="CHEBI:62192"/>
    </reaction>
</comment>
<comment type="catalytic activity">
    <reaction evidence="1">
        <text>a plastoquinone + NADPH + (n+1) H(+)(in) = a plastoquinol + NADP(+) + n H(+)(out)</text>
        <dbReference type="Rhea" id="RHEA:42612"/>
        <dbReference type="Rhea" id="RHEA-COMP:9561"/>
        <dbReference type="Rhea" id="RHEA-COMP:9562"/>
        <dbReference type="ChEBI" id="CHEBI:15378"/>
        <dbReference type="ChEBI" id="CHEBI:17757"/>
        <dbReference type="ChEBI" id="CHEBI:57783"/>
        <dbReference type="ChEBI" id="CHEBI:58349"/>
        <dbReference type="ChEBI" id="CHEBI:62192"/>
    </reaction>
</comment>
<comment type="subunit">
    <text evidence="1">NDH is composed of at least 16 different subunits, 5 of which are encoded in the nucleus.</text>
</comment>
<comment type="subcellular location">
    <subcellularLocation>
        <location evidence="1">Plastid</location>
        <location evidence="1">Chloroplast thylakoid membrane</location>
        <topology evidence="1">Multi-pass membrane protein</topology>
    </subcellularLocation>
</comment>
<comment type="similarity">
    <text evidence="1">Belongs to the complex I subunit 3 family.</text>
</comment>
<proteinExistence type="inferred from homology"/>
<accession>Q9TKX9</accession>
<gene>
    <name evidence="1" type="primary">ndhC</name>
</gene>
<geneLocation type="chloroplast"/>
<organism>
    <name type="scientific">Nephroselmis olivacea</name>
    <name type="common">Green alga</name>
    <dbReference type="NCBI Taxonomy" id="31312"/>
    <lineage>
        <taxon>Eukaryota</taxon>
        <taxon>Viridiplantae</taxon>
        <taxon>Chlorophyta</taxon>
        <taxon>Nephroselmidophyceae</taxon>
        <taxon>Nephroselmidales</taxon>
        <taxon>Nephroselmidaceae</taxon>
        <taxon>Nephroselmis</taxon>
    </lineage>
</organism>
<sequence>MMILEGYGSVLAFFVIASLIPVIALSASKLLRPRGGGPERRTTYESGIEPMGEAWIQFNIRYYMFALVFVVFDVETLFLYPWAVTFQRLGLSAFFEVLIFIIVLLIGLVYAWRKGALEWS</sequence>
<evidence type="ECO:0000255" key="1">
    <source>
        <dbReference type="HAMAP-Rule" id="MF_01394"/>
    </source>
</evidence>
<keyword id="KW-0150">Chloroplast</keyword>
<keyword id="KW-0472">Membrane</keyword>
<keyword id="KW-0520">NAD</keyword>
<keyword id="KW-0521">NADP</keyword>
<keyword id="KW-0934">Plastid</keyword>
<keyword id="KW-0618">Plastoquinone</keyword>
<keyword id="KW-0874">Quinone</keyword>
<keyword id="KW-0793">Thylakoid</keyword>
<keyword id="KW-1278">Translocase</keyword>
<keyword id="KW-0812">Transmembrane</keyword>
<keyword id="KW-1133">Transmembrane helix</keyword>
<keyword id="KW-0813">Transport</keyword>
<name>NU3C_NEPOL</name>
<reference key="1">
    <citation type="journal article" date="1999" name="Proc. Natl. Acad. Sci. U.S.A.">
        <title>The complete chloroplast DNA sequence of the green alga Nephroselmis olivacea: insights into the architecture of ancestral chloroplast genomes.</title>
        <authorList>
            <person name="Turmel M."/>
            <person name="Otis C."/>
            <person name="Lemieux C."/>
        </authorList>
    </citation>
    <scope>NUCLEOTIDE SEQUENCE [LARGE SCALE GENOMIC DNA]</scope>
    <source>
        <strain>NIES-484 / S-N-5-8</strain>
    </source>
</reference>
<feature type="chain" id="PRO_0000117850" description="NAD(P)H-quinone oxidoreductase subunit 3, chloroplastic">
    <location>
        <begin position="1"/>
        <end position="120"/>
    </location>
</feature>
<feature type="transmembrane region" description="Helical" evidence="1">
    <location>
        <begin position="3"/>
        <end position="23"/>
    </location>
</feature>
<feature type="transmembrane region" description="Helical" evidence="1">
    <location>
        <begin position="64"/>
        <end position="84"/>
    </location>
</feature>
<feature type="transmembrane region" description="Helical" evidence="1">
    <location>
        <begin position="89"/>
        <end position="109"/>
    </location>
</feature>
<dbReference type="EC" id="7.1.1.-" evidence="1"/>
<dbReference type="EMBL" id="AF137379">
    <property type="protein sequence ID" value="AAD54837.1"/>
    <property type="molecule type" value="Genomic_DNA"/>
</dbReference>
<dbReference type="RefSeq" id="NP_050866.1">
    <property type="nucleotide sequence ID" value="NC_000927.1"/>
</dbReference>
<dbReference type="SMR" id="Q9TKX9"/>
<dbReference type="GeneID" id="802049"/>
<dbReference type="GO" id="GO:0009535">
    <property type="term" value="C:chloroplast thylakoid membrane"/>
    <property type="evidence" value="ECO:0007669"/>
    <property type="project" value="UniProtKB-SubCell"/>
</dbReference>
<dbReference type="GO" id="GO:0030964">
    <property type="term" value="C:NADH dehydrogenase complex"/>
    <property type="evidence" value="ECO:0007669"/>
    <property type="project" value="TreeGrafter"/>
</dbReference>
<dbReference type="GO" id="GO:0008137">
    <property type="term" value="F:NADH dehydrogenase (ubiquinone) activity"/>
    <property type="evidence" value="ECO:0007669"/>
    <property type="project" value="InterPro"/>
</dbReference>
<dbReference type="GO" id="GO:0048038">
    <property type="term" value="F:quinone binding"/>
    <property type="evidence" value="ECO:0007669"/>
    <property type="project" value="UniProtKB-KW"/>
</dbReference>
<dbReference type="GO" id="GO:0019684">
    <property type="term" value="P:photosynthesis, light reaction"/>
    <property type="evidence" value="ECO:0007669"/>
    <property type="project" value="UniProtKB-UniRule"/>
</dbReference>
<dbReference type="Gene3D" id="1.20.58.1610">
    <property type="entry name" value="NADH:ubiquinone/plastoquinone oxidoreductase, chain 3"/>
    <property type="match status" value="1"/>
</dbReference>
<dbReference type="HAMAP" id="MF_01394">
    <property type="entry name" value="NDH1_NuoA"/>
    <property type="match status" value="1"/>
</dbReference>
<dbReference type="InterPro" id="IPR023043">
    <property type="entry name" value="NAD(P)H_OxRDtase_bac/plastid"/>
</dbReference>
<dbReference type="InterPro" id="IPR000440">
    <property type="entry name" value="NADH_UbQ/plastoQ_OxRdtase_su3"/>
</dbReference>
<dbReference type="InterPro" id="IPR038430">
    <property type="entry name" value="NDAH_ubi_oxred_su3_sf"/>
</dbReference>
<dbReference type="PANTHER" id="PTHR11058">
    <property type="entry name" value="NADH-UBIQUINONE OXIDOREDUCTASE CHAIN 3"/>
    <property type="match status" value="1"/>
</dbReference>
<dbReference type="PANTHER" id="PTHR11058:SF9">
    <property type="entry name" value="NADH-UBIQUINONE OXIDOREDUCTASE CHAIN 3"/>
    <property type="match status" value="1"/>
</dbReference>
<dbReference type="Pfam" id="PF00507">
    <property type="entry name" value="Oxidored_q4"/>
    <property type="match status" value="1"/>
</dbReference>
<protein>
    <recommendedName>
        <fullName evidence="1">NAD(P)H-quinone oxidoreductase subunit 3, chloroplastic</fullName>
        <ecNumber evidence="1">7.1.1.-</ecNumber>
    </recommendedName>
    <alternativeName>
        <fullName evidence="1">NAD(P)H dehydrogenase subunit 3</fullName>
    </alternativeName>
    <alternativeName>
        <fullName evidence="1">NADH-plastoquinone oxidoreductase subunit 3</fullName>
    </alternativeName>
</protein>